<reference key="1">
    <citation type="journal article" date="1997" name="Nature">
        <title>The complete genome sequence of the Gram-positive bacterium Bacillus subtilis.</title>
        <authorList>
            <person name="Kunst F."/>
            <person name="Ogasawara N."/>
            <person name="Moszer I."/>
            <person name="Albertini A.M."/>
            <person name="Alloni G."/>
            <person name="Azevedo V."/>
            <person name="Bertero M.G."/>
            <person name="Bessieres P."/>
            <person name="Bolotin A."/>
            <person name="Borchert S."/>
            <person name="Borriss R."/>
            <person name="Boursier L."/>
            <person name="Brans A."/>
            <person name="Braun M."/>
            <person name="Brignell S.C."/>
            <person name="Bron S."/>
            <person name="Brouillet S."/>
            <person name="Bruschi C.V."/>
            <person name="Caldwell B."/>
            <person name="Capuano V."/>
            <person name="Carter N.M."/>
            <person name="Choi S.-K."/>
            <person name="Codani J.-J."/>
            <person name="Connerton I.F."/>
            <person name="Cummings N.J."/>
            <person name="Daniel R.A."/>
            <person name="Denizot F."/>
            <person name="Devine K.M."/>
            <person name="Duesterhoeft A."/>
            <person name="Ehrlich S.D."/>
            <person name="Emmerson P.T."/>
            <person name="Entian K.-D."/>
            <person name="Errington J."/>
            <person name="Fabret C."/>
            <person name="Ferrari E."/>
            <person name="Foulger D."/>
            <person name="Fritz C."/>
            <person name="Fujita M."/>
            <person name="Fujita Y."/>
            <person name="Fuma S."/>
            <person name="Galizzi A."/>
            <person name="Galleron N."/>
            <person name="Ghim S.-Y."/>
            <person name="Glaser P."/>
            <person name="Goffeau A."/>
            <person name="Golightly E.J."/>
            <person name="Grandi G."/>
            <person name="Guiseppi G."/>
            <person name="Guy B.J."/>
            <person name="Haga K."/>
            <person name="Haiech J."/>
            <person name="Harwood C.R."/>
            <person name="Henaut A."/>
            <person name="Hilbert H."/>
            <person name="Holsappel S."/>
            <person name="Hosono S."/>
            <person name="Hullo M.-F."/>
            <person name="Itaya M."/>
            <person name="Jones L.-M."/>
            <person name="Joris B."/>
            <person name="Karamata D."/>
            <person name="Kasahara Y."/>
            <person name="Klaerr-Blanchard M."/>
            <person name="Klein C."/>
            <person name="Kobayashi Y."/>
            <person name="Koetter P."/>
            <person name="Koningstein G."/>
            <person name="Krogh S."/>
            <person name="Kumano M."/>
            <person name="Kurita K."/>
            <person name="Lapidus A."/>
            <person name="Lardinois S."/>
            <person name="Lauber J."/>
            <person name="Lazarevic V."/>
            <person name="Lee S.-M."/>
            <person name="Levine A."/>
            <person name="Liu H."/>
            <person name="Masuda S."/>
            <person name="Mauel C."/>
            <person name="Medigue C."/>
            <person name="Medina N."/>
            <person name="Mellado R.P."/>
            <person name="Mizuno M."/>
            <person name="Moestl D."/>
            <person name="Nakai S."/>
            <person name="Noback M."/>
            <person name="Noone D."/>
            <person name="O'Reilly M."/>
            <person name="Ogawa K."/>
            <person name="Ogiwara A."/>
            <person name="Oudega B."/>
            <person name="Park S.-H."/>
            <person name="Parro V."/>
            <person name="Pohl T.M."/>
            <person name="Portetelle D."/>
            <person name="Porwollik S."/>
            <person name="Prescott A.M."/>
            <person name="Presecan E."/>
            <person name="Pujic P."/>
            <person name="Purnelle B."/>
            <person name="Rapoport G."/>
            <person name="Rey M."/>
            <person name="Reynolds S."/>
            <person name="Rieger M."/>
            <person name="Rivolta C."/>
            <person name="Rocha E."/>
            <person name="Roche B."/>
            <person name="Rose M."/>
            <person name="Sadaie Y."/>
            <person name="Sato T."/>
            <person name="Scanlan E."/>
            <person name="Schleich S."/>
            <person name="Schroeter R."/>
            <person name="Scoffone F."/>
            <person name="Sekiguchi J."/>
            <person name="Sekowska A."/>
            <person name="Seror S.J."/>
            <person name="Serror P."/>
            <person name="Shin B.-S."/>
            <person name="Soldo B."/>
            <person name="Sorokin A."/>
            <person name="Tacconi E."/>
            <person name="Takagi T."/>
            <person name="Takahashi H."/>
            <person name="Takemaru K."/>
            <person name="Takeuchi M."/>
            <person name="Tamakoshi A."/>
            <person name="Tanaka T."/>
            <person name="Terpstra P."/>
            <person name="Tognoni A."/>
            <person name="Tosato V."/>
            <person name="Uchiyama S."/>
            <person name="Vandenbol M."/>
            <person name="Vannier F."/>
            <person name="Vassarotti A."/>
            <person name="Viari A."/>
            <person name="Wambutt R."/>
            <person name="Wedler E."/>
            <person name="Wedler H."/>
            <person name="Weitzenegger T."/>
            <person name="Winters P."/>
            <person name="Wipat A."/>
            <person name="Yamamoto H."/>
            <person name="Yamane K."/>
            <person name="Yasumoto K."/>
            <person name="Yata K."/>
            <person name="Yoshida K."/>
            <person name="Yoshikawa H.-F."/>
            <person name="Zumstein E."/>
            <person name="Yoshikawa H."/>
            <person name="Danchin A."/>
        </authorList>
    </citation>
    <scope>NUCLEOTIDE SEQUENCE [LARGE SCALE GENOMIC DNA]</scope>
    <source>
        <strain>168</strain>
    </source>
</reference>
<protein>
    <recommendedName>
        <fullName>SPbeta prophage-derived uncharacterized protein YomN</fullName>
    </recommendedName>
</protein>
<feature type="chain" id="PRO_0000360595" description="SPbeta prophage-derived uncharacterized protein YomN">
    <location>
        <begin position="1"/>
        <end position="139"/>
    </location>
</feature>
<keyword id="KW-1185">Reference proteome</keyword>
<accession>O31970</accession>
<dbReference type="EMBL" id="AL009126">
    <property type="protein sequence ID" value="CAB14047.1"/>
    <property type="molecule type" value="Genomic_DNA"/>
</dbReference>
<dbReference type="RefSeq" id="NP_390012.1">
    <property type="nucleotide sequence ID" value="NC_000964.3"/>
</dbReference>
<dbReference type="RefSeq" id="WP_004399281.1">
    <property type="nucleotide sequence ID" value="NZ_OZ025638.1"/>
</dbReference>
<dbReference type="FunCoup" id="O31970">
    <property type="interactions" value="63"/>
</dbReference>
<dbReference type="STRING" id="224308.BSU21290"/>
<dbReference type="PaxDb" id="224308-BSU21290"/>
<dbReference type="EnsemblBacteria" id="CAB14047">
    <property type="protein sequence ID" value="CAB14047"/>
    <property type="gene ID" value="BSU_21290"/>
</dbReference>
<dbReference type="GeneID" id="939144"/>
<dbReference type="KEGG" id="bsu:BSU21290"/>
<dbReference type="PATRIC" id="fig|224308.179.peg.2324"/>
<dbReference type="eggNOG" id="ENOG502ZRNY">
    <property type="taxonomic scope" value="Bacteria"/>
</dbReference>
<dbReference type="InParanoid" id="O31970"/>
<dbReference type="OrthoDB" id="2396600at2"/>
<dbReference type="BioCyc" id="BSUB:BSU21290-MONOMER"/>
<dbReference type="Proteomes" id="UP000001570">
    <property type="component" value="Chromosome"/>
</dbReference>
<proteinExistence type="predicted"/>
<organism>
    <name type="scientific">Bacillus subtilis (strain 168)</name>
    <dbReference type="NCBI Taxonomy" id="224308"/>
    <lineage>
        <taxon>Bacteria</taxon>
        <taxon>Bacillati</taxon>
        <taxon>Bacillota</taxon>
        <taxon>Bacilli</taxon>
        <taxon>Bacillales</taxon>
        <taxon>Bacillaceae</taxon>
        <taxon>Bacillus</taxon>
    </lineage>
</organism>
<gene>
    <name type="primary">yomN</name>
    <name type="ordered locus">BSU21290</name>
</gene>
<name>YOMN_BACSU</name>
<sequence>MAKTIKDIKAMVEQAAIQSIHKSSSNVKQIMVKTGQEHIVEDVYGAYDPLLYERTGQVKDAFITTNESNGVSLDNIREDDGKDIATVIETGQGYTYPDSYGYGYGNPRPFMKNTSETLRDGRLTAALKKDLKADGIKTD</sequence>